<keyword id="KW-0150">Chloroplast</keyword>
<keyword id="KW-0472">Membrane</keyword>
<keyword id="KW-0934">Plastid</keyword>
<keyword id="KW-1185">Reference proteome</keyword>
<keyword id="KW-0809">Transit peptide</keyword>
<keyword id="KW-0812">Transmembrane</keyword>
<keyword id="KW-1133">Transmembrane helix</keyword>
<organism>
    <name type="scientific">Arabidopsis thaliana</name>
    <name type="common">Mouse-ear cress</name>
    <dbReference type="NCBI Taxonomy" id="3702"/>
    <lineage>
        <taxon>Eukaryota</taxon>
        <taxon>Viridiplantae</taxon>
        <taxon>Streptophyta</taxon>
        <taxon>Embryophyta</taxon>
        <taxon>Tracheophyta</taxon>
        <taxon>Spermatophyta</taxon>
        <taxon>Magnoliopsida</taxon>
        <taxon>eudicotyledons</taxon>
        <taxon>Gunneridae</taxon>
        <taxon>Pentapetalae</taxon>
        <taxon>rosids</taxon>
        <taxon>malvids</taxon>
        <taxon>Brassicales</taxon>
        <taxon>Brassicaceae</taxon>
        <taxon>Camelineae</taxon>
        <taxon>Arabidopsis</taxon>
    </lineage>
</organism>
<feature type="transit peptide" description="Chloroplast" evidence="1">
    <location>
        <begin position="1"/>
        <end position="44"/>
    </location>
</feature>
<feature type="chain" id="PRO_0000331536" description="Probable anion transporter 3, chloroplastic">
    <location>
        <begin position="45"/>
        <end position="512"/>
    </location>
</feature>
<feature type="transmembrane region" description="Helical" evidence="1">
    <location>
        <begin position="102"/>
        <end position="124"/>
    </location>
</feature>
<feature type="transmembrane region" description="Helical" evidence="1">
    <location>
        <begin position="139"/>
        <end position="159"/>
    </location>
</feature>
<feature type="transmembrane region" description="Helical" evidence="1">
    <location>
        <begin position="167"/>
        <end position="187"/>
    </location>
</feature>
<feature type="transmembrane region" description="Helical" evidence="1">
    <location>
        <begin position="191"/>
        <end position="211"/>
    </location>
</feature>
<feature type="transmembrane region" description="Helical" evidence="1">
    <location>
        <begin position="228"/>
        <end position="248"/>
    </location>
</feature>
<feature type="transmembrane region" description="Helical" evidence="1">
    <location>
        <begin position="250"/>
        <end position="270"/>
    </location>
</feature>
<feature type="transmembrane region" description="Helical" evidence="1">
    <location>
        <begin position="324"/>
        <end position="344"/>
    </location>
</feature>
<feature type="transmembrane region" description="Helical" evidence="1">
    <location>
        <begin position="359"/>
        <end position="379"/>
    </location>
</feature>
<feature type="transmembrane region" description="Helical" evidence="1">
    <location>
        <begin position="396"/>
        <end position="416"/>
    </location>
</feature>
<feature type="transmembrane region" description="Helical" evidence="1">
    <location>
        <begin position="422"/>
        <end position="442"/>
    </location>
</feature>
<feature type="transmembrane region" description="Helical" evidence="1">
    <location>
        <begin position="462"/>
        <end position="482"/>
    </location>
</feature>
<feature type="transmembrane region" description="Helical" evidence="1">
    <location>
        <begin position="486"/>
        <end position="506"/>
    </location>
</feature>
<sequence>MATVGSLKPLHHSSCSSSFPRNPIVNRKALLGFVFDSARKNQIRCENLRYSSESDGKRRNAAAKKRNQSPERCAAEGVLTGGGGSEAIAEVRTMMPERIKVVILTACMMCLCNADRVVMSVAVVPLADKLGWSSSFLGVVQSSFLWGYIFSSVIGGALVDRYGGKRVLAWGVALWSLATLLTPWAAAHSTLALLCVRAFFGLAEGVAMPSMTTLLSRWFPMDERASAVGISMAGFHMGNVVGLLLTPLMLSSIGISGPFILFASLGLLWVSTWSSGVTNNPQDSPFITRSELRLIQAGKPVQPSTISPKPNPSLRLLLSKLPTWAIIFANVTNNWGYFVLLSWMPVYFQTVFNVNLKQAAWFSALPWATMAISGYYAGAASDFLIRTGHSVTSVRKIMQSIGFMGPGLSLLCLNFAKSPSCAAVFMTIALSLSSFSQAGFLLNMQDIAPQYAGFLHGISNCAGTLAAIVSTIGTGYFVQWLGSFQAFLTVTAFLYFATTVFWLLFATGERVF</sequence>
<evidence type="ECO:0000255" key="1"/>
<evidence type="ECO:0000269" key="2">
    <source>
    </source>
</evidence>
<evidence type="ECO:0000269" key="3">
    <source>
    </source>
</evidence>
<evidence type="ECO:0000305" key="4"/>
<reference key="1">
    <citation type="journal article" date="1999" name="Nature">
        <title>Sequence and analysis of chromosome 2 of the plant Arabidopsis thaliana.</title>
        <authorList>
            <person name="Lin X."/>
            <person name="Kaul S."/>
            <person name="Rounsley S.D."/>
            <person name="Shea T.P."/>
            <person name="Benito M.-I."/>
            <person name="Town C.D."/>
            <person name="Fujii C.Y."/>
            <person name="Mason T.M."/>
            <person name="Bowman C.L."/>
            <person name="Barnstead M.E."/>
            <person name="Feldblyum T.V."/>
            <person name="Buell C.R."/>
            <person name="Ketchum K.A."/>
            <person name="Lee J.J."/>
            <person name="Ronning C.M."/>
            <person name="Koo H.L."/>
            <person name="Moffat K.S."/>
            <person name="Cronin L.A."/>
            <person name="Shen M."/>
            <person name="Pai G."/>
            <person name="Van Aken S."/>
            <person name="Umayam L."/>
            <person name="Tallon L.J."/>
            <person name="Gill J.E."/>
            <person name="Adams M.D."/>
            <person name="Carrera A.J."/>
            <person name="Creasy T.H."/>
            <person name="Goodman H.M."/>
            <person name="Somerville C.R."/>
            <person name="Copenhaver G.P."/>
            <person name="Preuss D."/>
            <person name="Nierman W.C."/>
            <person name="White O."/>
            <person name="Eisen J.A."/>
            <person name="Salzberg S.L."/>
            <person name="Fraser C.M."/>
            <person name="Venter J.C."/>
        </authorList>
    </citation>
    <scope>NUCLEOTIDE SEQUENCE [LARGE SCALE GENOMIC DNA]</scope>
    <source>
        <strain>cv. Columbia</strain>
    </source>
</reference>
<reference key="2">
    <citation type="journal article" date="2017" name="Plant J.">
        <title>Araport11: a complete reannotation of the Arabidopsis thaliana reference genome.</title>
        <authorList>
            <person name="Cheng C.Y."/>
            <person name="Krishnakumar V."/>
            <person name="Chan A.P."/>
            <person name="Thibaud-Nissen F."/>
            <person name="Schobel S."/>
            <person name="Town C.D."/>
        </authorList>
    </citation>
    <scope>GENOME REANNOTATION</scope>
    <source>
        <strain>cv. Columbia</strain>
    </source>
</reference>
<reference key="3">
    <citation type="journal article" date="2004" name="Planta">
        <title>Characterization of a protein of the plastid inner envelope having homology to animal inorganic phosphate, chloride and organic-anion transporters.</title>
        <authorList>
            <person name="Roth C."/>
            <person name="Menzel G."/>
            <person name="Petetot J.M."/>
            <person name="Rochat-Hacker S."/>
            <person name="Poirier Y."/>
        </authorList>
    </citation>
    <scope>GENE FAMILY</scope>
    <scope>NOMENCLATURE</scope>
</reference>
<reference key="4">
    <citation type="journal article" date="2008" name="New Phytol.">
        <title>Functional analysis of the Arabidopsis PHT4 family of intracellular phosphate transporters.</title>
        <authorList>
            <person name="Guo B."/>
            <person name="Jin Y."/>
            <person name="Wussler C."/>
            <person name="Blancaflor E.B."/>
            <person name="Motes C.M."/>
            <person name="Versaw W.K."/>
        </authorList>
    </citation>
    <scope>FUNCTION</scope>
    <scope>SUBCELLULAR LOCATION</scope>
</reference>
<reference key="5">
    <citation type="journal article" date="2008" name="Plant Signal. Behav.">
        <title>Differential expression and phylogenetic analysis suggest specialization of plastid-localized members of the PHT4 phosphate transporter family for photosynthetic and heterotrophic tissues.</title>
        <authorList>
            <person name="Guo B."/>
            <person name="Irigoyen S."/>
            <person name="Fowler T.B."/>
            <person name="Versaw W.K."/>
        </authorList>
    </citation>
    <scope>TISSUE SPECIFICITY</scope>
    <scope>INDUCTION</scope>
</reference>
<dbReference type="EMBL" id="CP002685">
    <property type="protein sequence ID" value="AEC09485.1"/>
    <property type="molecule type" value="Genomic_DNA"/>
</dbReference>
<dbReference type="PIR" id="D84800">
    <property type="entry name" value="D84800"/>
</dbReference>
<dbReference type="RefSeq" id="NP_181341.2">
    <property type="nucleotide sequence ID" value="NM_129362.4"/>
</dbReference>
<dbReference type="SMR" id="Q7XJR2"/>
<dbReference type="FunCoup" id="Q7XJR2">
    <property type="interactions" value="381"/>
</dbReference>
<dbReference type="STRING" id="3702.Q7XJR2"/>
<dbReference type="PaxDb" id="3702-AT2G38060.1"/>
<dbReference type="EnsemblPlants" id="AT2G38060.1">
    <property type="protein sequence ID" value="AT2G38060.1"/>
    <property type="gene ID" value="AT2G38060"/>
</dbReference>
<dbReference type="GeneID" id="818384"/>
<dbReference type="Gramene" id="AT2G38060.1">
    <property type="protein sequence ID" value="AT2G38060.1"/>
    <property type="gene ID" value="AT2G38060"/>
</dbReference>
<dbReference type="KEGG" id="ath:AT2G38060"/>
<dbReference type="Araport" id="AT2G38060"/>
<dbReference type="TAIR" id="AT2G38060">
    <property type="gene designation" value="PHT4"/>
</dbReference>
<dbReference type="eggNOG" id="KOG2532">
    <property type="taxonomic scope" value="Eukaryota"/>
</dbReference>
<dbReference type="HOGENOM" id="CLU_001265_5_11_1"/>
<dbReference type="InParanoid" id="Q7XJR2"/>
<dbReference type="OMA" id="VTTIFWN"/>
<dbReference type="PhylomeDB" id="Q7XJR2"/>
<dbReference type="BRENDA" id="7.3.2.1">
    <property type="organism ID" value="399"/>
</dbReference>
<dbReference type="PRO" id="PR:Q7XJR2"/>
<dbReference type="Proteomes" id="UP000006548">
    <property type="component" value="Chromosome 2"/>
</dbReference>
<dbReference type="ExpressionAtlas" id="Q7XJR2">
    <property type="expression patterns" value="baseline and differential"/>
</dbReference>
<dbReference type="GO" id="GO:0031969">
    <property type="term" value="C:chloroplast membrane"/>
    <property type="evidence" value="ECO:0007669"/>
    <property type="project" value="UniProtKB-SubCell"/>
</dbReference>
<dbReference type="GO" id="GO:0009536">
    <property type="term" value="C:plastid"/>
    <property type="evidence" value="ECO:0000314"/>
    <property type="project" value="TAIR"/>
</dbReference>
<dbReference type="GO" id="GO:0005315">
    <property type="term" value="F:phosphate transmembrane transporter activity"/>
    <property type="evidence" value="ECO:0000314"/>
    <property type="project" value="TAIR"/>
</dbReference>
<dbReference type="CDD" id="cd17380">
    <property type="entry name" value="MFS_SLC17A9_like"/>
    <property type="match status" value="1"/>
</dbReference>
<dbReference type="FunFam" id="1.20.1250.20:FF:000131">
    <property type="entry name" value="Probable anion transporter 3, chloroplastic"/>
    <property type="match status" value="1"/>
</dbReference>
<dbReference type="FunFam" id="1.20.1250.20:FF:000142">
    <property type="entry name" value="probable anion transporter 3, chloroplastic"/>
    <property type="match status" value="1"/>
</dbReference>
<dbReference type="Gene3D" id="1.20.1250.20">
    <property type="entry name" value="MFS general substrate transporter like domains"/>
    <property type="match status" value="2"/>
</dbReference>
<dbReference type="InterPro" id="IPR011701">
    <property type="entry name" value="MFS"/>
</dbReference>
<dbReference type="InterPro" id="IPR020846">
    <property type="entry name" value="MFS_dom"/>
</dbReference>
<dbReference type="InterPro" id="IPR050382">
    <property type="entry name" value="MFS_Na/Anion_cotransporter"/>
</dbReference>
<dbReference type="InterPro" id="IPR036259">
    <property type="entry name" value="MFS_trans_sf"/>
</dbReference>
<dbReference type="InterPro" id="IPR044777">
    <property type="entry name" value="SLC17A9-like"/>
</dbReference>
<dbReference type="PANTHER" id="PTHR11662:SF399">
    <property type="entry name" value="FI19708P1-RELATED"/>
    <property type="match status" value="1"/>
</dbReference>
<dbReference type="PANTHER" id="PTHR11662">
    <property type="entry name" value="SOLUTE CARRIER FAMILY 17"/>
    <property type="match status" value="1"/>
</dbReference>
<dbReference type="Pfam" id="PF07690">
    <property type="entry name" value="MFS_1"/>
    <property type="match status" value="1"/>
</dbReference>
<dbReference type="SUPFAM" id="SSF103473">
    <property type="entry name" value="MFS general substrate transporter"/>
    <property type="match status" value="1"/>
</dbReference>
<dbReference type="PROSITE" id="PS50850">
    <property type="entry name" value="MFS"/>
    <property type="match status" value="1"/>
</dbReference>
<protein>
    <recommendedName>
        <fullName>Probable anion transporter 3, chloroplastic</fullName>
    </recommendedName>
    <alternativeName>
        <fullName>Phosphate transporter PHT4;2</fullName>
    </alternativeName>
</protein>
<proteinExistence type="evidence at transcript level"/>
<gene>
    <name type="primary">ANTR3</name>
    <name type="synonym">PHT4;2</name>
    <name type="ordered locus">At2g38060</name>
    <name type="ORF">T8P21.3</name>
</gene>
<name>ANTR3_ARATH</name>
<comment type="function">
    <text evidence="2">Inorganic phosphate and probable anion transporter.</text>
</comment>
<comment type="subcellular location">
    <subcellularLocation>
        <location evidence="2">Plastid</location>
        <location evidence="2">Chloroplast membrane</location>
        <topology evidence="2">Multi-pass membrane protein</topology>
    </subcellularLocation>
</comment>
<comment type="tissue specificity">
    <text evidence="3">Expressed in roots.</text>
</comment>
<comment type="induction">
    <text evidence="3">Expressed with a circadian rhythm showing a peak during dark (under long day conditions).</text>
</comment>
<comment type="similarity">
    <text evidence="4">Belongs to the major facilitator superfamily. Sodium/anion cotransporter (TC 2.A.1.14) family.</text>
</comment>
<accession>Q7XJR2</accession>